<reference key="1">
    <citation type="journal article" date="2006" name="Proc. Natl. Acad. Sci. U.S.A.">
        <title>Molecular genetic anatomy of inter- and intraserotype variation in the human bacterial pathogen group A Streptococcus.</title>
        <authorList>
            <person name="Beres S.B."/>
            <person name="Richter E.W."/>
            <person name="Nagiec M.J."/>
            <person name="Sumby P."/>
            <person name="Porcella S.F."/>
            <person name="DeLeo F.R."/>
            <person name="Musser J.M."/>
        </authorList>
    </citation>
    <scope>NUCLEOTIDE SEQUENCE [LARGE SCALE GENOMIC DNA]</scope>
    <source>
        <strain>MGAS10270</strain>
    </source>
</reference>
<feature type="chain" id="PRO_1000048297" description="Cytidylate kinase">
    <location>
        <begin position="1"/>
        <end position="226"/>
    </location>
</feature>
<feature type="binding site" evidence="1">
    <location>
        <begin position="10"/>
        <end position="18"/>
    </location>
    <ligand>
        <name>ATP</name>
        <dbReference type="ChEBI" id="CHEBI:30616"/>
    </ligand>
</feature>
<evidence type="ECO:0000255" key="1">
    <source>
        <dbReference type="HAMAP-Rule" id="MF_00238"/>
    </source>
</evidence>
<keyword id="KW-0067">ATP-binding</keyword>
<keyword id="KW-0963">Cytoplasm</keyword>
<keyword id="KW-0418">Kinase</keyword>
<keyword id="KW-0547">Nucleotide-binding</keyword>
<keyword id="KW-0808">Transferase</keyword>
<name>KCY_STRPD</name>
<sequence length="226" mass="25035">MKAIKIAIDGPASSGKSTVAKIIAKNLGYTYLDTGAMYRSATYIALTHGYTGKEVALILEELEKNPIFFKKAKDGSQLVFLGDEDVTLAIRQNDVTNNVSWISALPEIREELVHQQRRIAQAGGIIMDGRDIGTVVLPDAELKIFLVASVEERAERRYKENLEKGIESDFETLKEEIAARDYKDSHRKVSPLKAAEDALIFDTTGVSIDGVVQFIQEKAEKIVDMS</sequence>
<gene>
    <name evidence="1" type="primary">cmk</name>
    <name type="ordered locus">MGAS10270_Spy0673</name>
</gene>
<proteinExistence type="inferred from homology"/>
<accession>Q1JHJ8</accession>
<organism>
    <name type="scientific">Streptococcus pyogenes serotype M2 (strain MGAS10270)</name>
    <dbReference type="NCBI Taxonomy" id="370552"/>
    <lineage>
        <taxon>Bacteria</taxon>
        <taxon>Bacillati</taxon>
        <taxon>Bacillota</taxon>
        <taxon>Bacilli</taxon>
        <taxon>Lactobacillales</taxon>
        <taxon>Streptococcaceae</taxon>
        <taxon>Streptococcus</taxon>
    </lineage>
</organism>
<dbReference type="EC" id="2.7.4.25" evidence="1"/>
<dbReference type="EMBL" id="CP000260">
    <property type="protein sequence ID" value="ABF33738.1"/>
    <property type="molecule type" value="Genomic_DNA"/>
</dbReference>
<dbReference type="SMR" id="Q1JHJ8"/>
<dbReference type="KEGG" id="sph:MGAS10270_Spy0673"/>
<dbReference type="HOGENOM" id="CLU_079959_0_2_9"/>
<dbReference type="Proteomes" id="UP000002436">
    <property type="component" value="Chromosome"/>
</dbReference>
<dbReference type="GO" id="GO:0005829">
    <property type="term" value="C:cytosol"/>
    <property type="evidence" value="ECO:0007669"/>
    <property type="project" value="TreeGrafter"/>
</dbReference>
<dbReference type="GO" id="GO:0005524">
    <property type="term" value="F:ATP binding"/>
    <property type="evidence" value="ECO:0007669"/>
    <property type="project" value="UniProtKB-UniRule"/>
</dbReference>
<dbReference type="GO" id="GO:0036430">
    <property type="term" value="F:CMP kinase activity"/>
    <property type="evidence" value="ECO:0007669"/>
    <property type="project" value="RHEA"/>
</dbReference>
<dbReference type="GO" id="GO:0036431">
    <property type="term" value="F:dCMP kinase activity"/>
    <property type="evidence" value="ECO:0007669"/>
    <property type="project" value="RHEA"/>
</dbReference>
<dbReference type="GO" id="GO:0015949">
    <property type="term" value="P:nucleobase-containing small molecule interconversion"/>
    <property type="evidence" value="ECO:0007669"/>
    <property type="project" value="TreeGrafter"/>
</dbReference>
<dbReference type="GO" id="GO:0006220">
    <property type="term" value="P:pyrimidine nucleotide metabolic process"/>
    <property type="evidence" value="ECO:0007669"/>
    <property type="project" value="UniProtKB-UniRule"/>
</dbReference>
<dbReference type="CDD" id="cd02020">
    <property type="entry name" value="CMPK"/>
    <property type="match status" value="1"/>
</dbReference>
<dbReference type="FunFam" id="3.40.50.300:FF:000484">
    <property type="entry name" value="Cytidylate kinase"/>
    <property type="match status" value="1"/>
</dbReference>
<dbReference type="Gene3D" id="3.40.50.300">
    <property type="entry name" value="P-loop containing nucleotide triphosphate hydrolases"/>
    <property type="match status" value="1"/>
</dbReference>
<dbReference type="HAMAP" id="MF_00238">
    <property type="entry name" value="Cytidyl_kinase_type1"/>
    <property type="match status" value="1"/>
</dbReference>
<dbReference type="InterPro" id="IPR003136">
    <property type="entry name" value="Cytidylate_kin"/>
</dbReference>
<dbReference type="InterPro" id="IPR011994">
    <property type="entry name" value="Cytidylate_kinase_dom"/>
</dbReference>
<dbReference type="InterPro" id="IPR027417">
    <property type="entry name" value="P-loop_NTPase"/>
</dbReference>
<dbReference type="NCBIfam" id="TIGR00017">
    <property type="entry name" value="cmk"/>
    <property type="match status" value="1"/>
</dbReference>
<dbReference type="PANTHER" id="PTHR21299:SF2">
    <property type="entry name" value="CYTIDYLATE KINASE"/>
    <property type="match status" value="1"/>
</dbReference>
<dbReference type="PANTHER" id="PTHR21299">
    <property type="entry name" value="CYTIDYLATE KINASE/PANTOATE-BETA-ALANINE LIGASE"/>
    <property type="match status" value="1"/>
</dbReference>
<dbReference type="Pfam" id="PF02224">
    <property type="entry name" value="Cytidylate_kin"/>
    <property type="match status" value="1"/>
</dbReference>
<dbReference type="SUPFAM" id="SSF52540">
    <property type="entry name" value="P-loop containing nucleoside triphosphate hydrolases"/>
    <property type="match status" value="1"/>
</dbReference>
<protein>
    <recommendedName>
        <fullName evidence="1">Cytidylate kinase</fullName>
        <shortName evidence="1">CK</shortName>
        <ecNumber evidence="1">2.7.4.25</ecNumber>
    </recommendedName>
    <alternativeName>
        <fullName evidence="1">Cytidine monophosphate kinase</fullName>
        <shortName evidence="1">CMP kinase</shortName>
    </alternativeName>
</protein>
<comment type="catalytic activity">
    <reaction evidence="1">
        <text>CMP + ATP = CDP + ADP</text>
        <dbReference type="Rhea" id="RHEA:11600"/>
        <dbReference type="ChEBI" id="CHEBI:30616"/>
        <dbReference type="ChEBI" id="CHEBI:58069"/>
        <dbReference type="ChEBI" id="CHEBI:60377"/>
        <dbReference type="ChEBI" id="CHEBI:456216"/>
        <dbReference type="EC" id="2.7.4.25"/>
    </reaction>
</comment>
<comment type="catalytic activity">
    <reaction evidence="1">
        <text>dCMP + ATP = dCDP + ADP</text>
        <dbReference type="Rhea" id="RHEA:25094"/>
        <dbReference type="ChEBI" id="CHEBI:30616"/>
        <dbReference type="ChEBI" id="CHEBI:57566"/>
        <dbReference type="ChEBI" id="CHEBI:58593"/>
        <dbReference type="ChEBI" id="CHEBI:456216"/>
        <dbReference type="EC" id="2.7.4.25"/>
    </reaction>
</comment>
<comment type="subcellular location">
    <subcellularLocation>
        <location evidence="1">Cytoplasm</location>
    </subcellularLocation>
</comment>
<comment type="similarity">
    <text evidence="1">Belongs to the cytidylate kinase family. Type 1 subfamily.</text>
</comment>